<reference key="1">
    <citation type="journal article" date="2007" name="PLoS Genet.">
        <title>Patterns and implications of gene gain and loss in the evolution of Prochlorococcus.</title>
        <authorList>
            <person name="Kettler G.C."/>
            <person name="Martiny A.C."/>
            <person name="Huang K."/>
            <person name="Zucker J."/>
            <person name="Coleman M.L."/>
            <person name="Rodrigue S."/>
            <person name="Chen F."/>
            <person name="Lapidus A."/>
            <person name="Ferriera S."/>
            <person name="Johnson J."/>
            <person name="Steglich C."/>
            <person name="Church G.M."/>
            <person name="Richardson P."/>
            <person name="Chisholm S.W."/>
        </authorList>
    </citation>
    <scope>NUCLEOTIDE SEQUENCE [LARGE SCALE GENOMIC DNA]</scope>
    <source>
        <strain>AS9601</strain>
    </source>
</reference>
<name>RL5_PROMS</name>
<keyword id="KW-0687">Ribonucleoprotein</keyword>
<keyword id="KW-0689">Ribosomal protein</keyword>
<keyword id="KW-0694">RNA-binding</keyword>
<keyword id="KW-0699">rRNA-binding</keyword>
<keyword id="KW-0820">tRNA-binding</keyword>
<dbReference type="EMBL" id="CP000551">
    <property type="protein sequence ID" value="ABM71036.1"/>
    <property type="molecule type" value="Genomic_DNA"/>
</dbReference>
<dbReference type="RefSeq" id="WP_011819160.1">
    <property type="nucleotide sequence ID" value="NC_008816.1"/>
</dbReference>
<dbReference type="SMR" id="A2BTC5"/>
<dbReference type="STRING" id="146891.A9601_17531"/>
<dbReference type="KEGG" id="pmb:A9601_17531"/>
<dbReference type="eggNOG" id="COG0094">
    <property type="taxonomic scope" value="Bacteria"/>
</dbReference>
<dbReference type="HOGENOM" id="CLU_061015_2_1_3"/>
<dbReference type="OrthoDB" id="9806626at2"/>
<dbReference type="Proteomes" id="UP000002590">
    <property type="component" value="Chromosome"/>
</dbReference>
<dbReference type="GO" id="GO:1990904">
    <property type="term" value="C:ribonucleoprotein complex"/>
    <property type="evidence" value="ECO:0007669"/>
    <property type="project" value="UniProtKB-KW"/>
</dbReference>
<dbReference type="GO" id="GO:0005840">
    <property type="term" value="C:ribosome"/>
    <property type="evidence" value="ECO:0007669"/>
    <property type="project" value="UniProtKB-KW"/>
</dbReference>
<dbReference type="GO" id="GO:0019843">
    <property type="term" value="F:rRNA binding"/>
    <property type="evidence" value="ECO:0007669"/>
    <property type="project" value="UniProtKB-UniRule"/>
</dbReference>
<dbReference type="GO" id="GO:0003735">
    <property type="term" value="F:structural constituent of ribosome"/>
    <property type="evidence" value="ECO:0007669"/>
    <property type="project" value="InterPro"/>
</dbReference>
<dbReference type="GO" id="GO:0000049">
    <property type="term" value="F:tRNA binding"/>
    <property type="evidence" value="ECO:0007669"/>
    <property type="project" value="UniProtKB-UniRule"/>
</dbReference>
<dbReference type="GO" id="GO:0006412">
    <property type="term" value="P:translation"/>
    <property type="evidence" value="ECO:0007669"/>
    <property type="project" value="UniProtKB-UniRule"/>
</dbReference>
<dbReference type="FunFam" id="3.30.1440.10:FF:000001">
    <property type="entry name" value="50S ribosomal protein L5"/>
    <property type="match status" value="1"/>
</dbReference>
<dbReference type="Gene3D" id="3.30.1440.10">
    <property type="match status" value="1"/>
</dbReference>
<dbReference type="HAMAP" id="MF_01333_B">
    <property type="entry name" value="Ribosomal_uL5_B"/>
    <property type="match status" value="1"/>
</dbReference>
<dbReference type="InterPro" id="IPR002132">
    <property type="entry name" value="Ribosomal_uL5"/>
</dbReference>
<dbReference type="InterPro" id="IPR020930">
    <property type="entry name" value="Ribosomal_uL5_bac-type"/>
</dbReference>
<dbReference type="InterPro" id="IPR031309">
    <property type="entry name" value="Ribosomal_uL5_C"/>
</dbReference>
<dbReference type="InterPro" id="IPR020929">
    <property type="entry name" value="Ribosomal_uL5_CS"/>
</dbReference>
<dbReference type="InterPro" id="IPR022803">
    <property type="entry name" value="Ribosomal_uL5_dom_sf"/>
</dbReference>
<dbReference type="InterPro" id="IPR031310">
    <property type="entry name" value="Ribosomal_uL5_N"/>
</dbReference>
<dbReference type="NCBIfam" id="NF000585">
    <property type="entry name" value="PRK00010.1"/>
    <property type="match status" value="1"/>
</dbReference>
<dbReference type="PANTHER" id="PTHR11994">
    <property type="entry name" value="60S RIBOSOMAL PROTEIN L11-RELATED"/>
    <property type="match status" value="1"/>
</dbReference>
<dbReference type="Pfam" id="PF00281">
    <property type="entry name" value="Ribosomal_L5"/>
    <property type="match status" value="1"/>
</dbReference>
<dbReference type="Pfam" id="PF00673">
    <property type="entry name" value="Ribosomal_L5_C"/>
    <property type="match status" value="1"/>
</dbReference>
<dbReference type="PIRSF" id="PIRSF002161">
    <property type="entry name" value="Ribosomal_L5"/>
    <property type="match status" value="1"/>
</dbReference>
<dbReference type="SUPFAM" id="SSF55282">
    <property type="entry name" value="RL5-like"/>
    <property type="match status" value="1"/>
</dbReference>
<dbReference type="PROSITE" id="PS00358">
    <property type="entry name" value="RIBOSOMAL_L5"/>
    <property type="match status" value="1"/>
</dbReference>
<protein>
    <recommendedName>
        <fullName evidence="1">Large ribosomal subunit protein uL5</fullName>
    </recommendedName>
    <alternativeName>
        <fullName evidence="2">50S ribosomal protein L5</fullName>
    </alternativeName>
</protein>
<sequence>MTLKNRYKESIRPKLLKDLGLKNIHQVPKVVKVNVNRGLGEAASNSKALEASLNEMATITGQKALVTRAKKAIAGFKIREGMPIGCTVTLRGDRMYSFLERFINLALPRIRDFRGVNPKSFDGRGNYTVGVKEQLIFPEISFDKIDSIRGMDITIVTSAKSDQEGKALLQELGMPFSKN</sequence>
<proteinExistence type="inferred from homology"/>
<feature type="chain" id="PRO_1000052797" description="Large ribosomal subunit protein uL5">
    <location>
        <begin position="1"/>
        <end position="179"/>
    </location>
</feature>
<accession>A2BTC5</accession>
<organism>
    <name type="scientific">Prochlorococcus marinus (strain AS9601)</name>
    <dbReference type="NCBI Taxonomy" id="146891"/>
    <lineage>
        <taxon>Bacteria</taxon>
        <taxon>Bacillati</taxon>
        <taxon>Cyanobacteriota</taxon>
        <taxon>Cyanophyceae</taxon>
        <taxon>Synechococcales</taxon>
        <taxon>Prochlorococcaceae</taxon>
        <taxon>Prochlorococcus</taxon>
    </lineage>
</organism>
<gene>
    <name evidence="1" type="primary">rplE</name>
    <name evidence="1" type="synonym">rpl5</name>
    <name type="ordered locus">A9601_17531</name>
</gene>
<evidence type="ECO:0000255" key="1">
    <source>
        <dbReference type="HAMAP-Rule" id="MF_01333"/>
    </source>
</evidence>
<evidence type="ECO:0000305" key="2"/>
<comment type="function">
    <text evidence="1">This is one of the proteins that bind and probably mediate the attachment of the 5S RNA into the large ribosomal subunit, where it forms part of the central protuberance. In the 70S ribosome it contacts protein S13 of the 30S subunit (bridge B1b), connecting the 2 subunits; this bridge is implicated in subunit movement. Contacts the P site tRNA; the 5S rRNA and some of its associated proteins might help stabilize positioning of ribosome-bound tRNAs.</text>
</comment>
<comment type="subunit">
    <text evidence="1">Part of the 50S ribosomal subunit; part of the 5S rRNA/L5/L18/L25 subcomplex. Contacts the 5S rRNA and the P site tRNA. Forms a bridge to the 30S subunit in the 70S ribosome.</text>
</comment>
<comment type="similarity">
    <text evidence="1">Belongs to the universal ribosomal protein uL5 family.</text>
</comment>